<organism>
    <name type="scientific">Bacillus cereus (strain ZK / E33L)</name>
    <dbReference type="NCBI Taxonomy" id="288681"/>
    <lineage>
        <taxon>Bacteria</taxon>
        <taxon>Bacillati</taxon>
        <taxon>Bacillota</taxon>
        <taxon>Bacilli</taxon>
        <taxon>Bacillales</taxon>
        <taxon>Bacillaceae</taxon>
        <taxon>Bacillus</taxon>
        <taxon>Bacillus cereus group</taxon>
    </lineage>
</organism>
<sequence>MKNISLLGASGSIGTQTLDVLRSHPDQFRLVAFSVGKNIDYAVKVIQEFSPQIVSVQREEDVLKLQAVSGNTKIVYGSEGLLEVALHPDAEIVVNAVVGSVGLLPTLRAIEAKKTIGIANKETLVTAGHLVMEAARKHNVSLLPVDSEHSAIFQCLNGENEKRISRLIITASGGSFRDKTRDELHHVTVEDALRHPNWSMGSKITIDSATMMNKGLEVIEAHWLFGIPYEQIDVVLHKESIIHSMVEFEDRSVMAQLGSPDMRVPIQYALTYPDRLPLSDTKQLNLWEIGTLHFEKMNQERFRCLRFAYEAGKAGGSMPAVMNAANEVAVEAFLQKRIGFLTVEDLIEKAMNHHNVIARPSLEEILEIDAATRRFVMEQI</sequence>
<protein>
    <recommendedName>
        <fullName evidence="1">1-deoxy-D-xylulose 5-phosphate reductoisomerase 2</fullName>
        <shortName evidence="1">DXP reductoisomerase 2</shortName>
        <ecNumber evidence="1">1.1.1.267</ecNumber>
    </recommendedName>
    <alternativeName>
        <fullName evidence="1">1-deoxyxylulose-5-phosphate reductoisomerase 2</fullName>
    </alternativeName>
    <alternativeName>
        <fullName evidence="1">2-C-methyl-D-erythritol 4-phosphate synthase 2</fullName>
    </alternativeName>
</protein>
<comment type="function">
    <text evidence="1">Catalyzes the NADPH-dependent rearrangement and reduction of 1-deoxy-D-xylulose-5-phosphate (DXP) to 2-C-methyl-D-erythritol 4-phosphate (MEP).</text>
</comment>
<comment type="catalytic activity">
    <reaction evidence="1">
        <text>2-C-methyl-D-erythritol 4-phosphate + NADP(+) = 1-deoxy-D-xylulose 5-phosphate + NADPH + H(+)</text>
        <dbReference type="Rhea" id="RHEA:13717"/>
        <dbReference type="ChEBI" id="CHEBI:15378"/>
        <dbReference type="ChEBI" id="CHEBI:57783"/>
        <dbReference type="ChEBI" id="CHEBI:57792"/>
        <dbReference type="ChEBI" id="CHEBI:58262"/>
        <dbReference type="ChEBI" id="CHEBI:58349"/>
        <dbReference type="EC" id="1.1.1.267"/>
    </reaction>
    <physiologicalReaction direction="right-to-left" evidence="1">
        <dbReference type="Rhea" id="RHEA:13719"/>
    </physiologicalReaction>
</comment>
<comment type="cofactor">
    <cofactor evidence="1">
        <name>Mg(2+)</name>
        <dbReference type="ChEBI" id="CHEBI:18420"/>
    </cofactor>
    <cofactor evidence="1">
        <name>Mn(2+)</name>
        <dbReference type="ChEBI" id="CHEBI:29035"/>
    </cofactor>
</comment>
<comment type="pathway">
    <text evidence="1">Isoprenoid biosynthesis; isopentenyl diphosphate biosynthesis via DXP pathway; isopentenyl diphosphate from 1-deoxy-D-xylulose 5-phosphate: step 1/6.</text>
</comment>
<comment type="similarity">
    <text evidence="1">Belongs to the DXR family.</text>
</comment>
<gene>
    <name evidence="1" type="primary">dxr2</name>
    <name type="ordered locus">BCE33L3580</name>
</gene>
<evidence type="ECO:0000255" key="1">
    <source>
        <dbReference type="HAMAP-Rule" id="MF_00183"/>
    </source>
</evidence>
<keyword id="KW-0414">Isoprene biosynthesis</keyword>
<keyword id="KW-0464">Manganese</keyword>
<keyword id="KW-0479">Metal-binding</keyword>
<keyword id="KW-0521">NADP</keyword>
<keyword id="KW-0560">Oxidoreductase</keyword>
<proteinExistence type="inferred from homology"/>
<dbReference type="EC" id="1.1.1.267" evidence="1"/>
<dbReference type="EMBL" id="CP000001">
    <property type="protein sequence ID" value="AAU16686.1"/>
    <property type="molecule type" value="Genomic_DNA"/>
</dbReference>
<dbReference type="SMR" id="Q636K5"/>
<dbReference type="KEGG" id="bcz:BCE33L3580"/>
<dbReference type="PATRIC" id="fig|288681.22.peg.1831"/>
<dbReference type="UniPathway" id="UPA00056">
    <property type="reaction ID" value="UER00092"/>
</dbReference>
<dbReference type="Proteomes" id="UP000002612">
    <property type="component" value="Chromosome"/>
</dbReference>
<dbReference type="GO" id="GO:0030604">
    <property type="term" value="F:1-deoxy-D-xylulose-5-phosphate reductoisomerase activity"/>
    <property type="evidence" value="ECO:0007669"/>
    <property type="project" value="UniProtKB-UniRule"/>
</dbReference>
<dbReference type="GO" id="GO:0030145">
    <property type="term" value="F:manganese ion binding"/>
    <property type="evidence" value="ECO:0007669"/>
    <property type="project" value="TreeGrafter"/>
</dbReference>
<dbReference type="GO" id="GO:0070402">
    <property type="term" value="F:NADPH binding"/>
    <property type="evidence" value="ECO:0007669"/>
    <property type="project" value="InterPro"/>
</dbReference>
<dbReference type="GO" id="GO:0051484">
    <property type="term" value="P:isopentenyl diphosphate biosynthetic process, methylerythritol 4-phosphate pathway involved in terpenoid biosynthetic process"/>
    <property type="evidence" value="ECO:0007669"/>
    <property type="project" value="TreeGrafter"/>
</dbReference>
<dbReference type="FunFam" id="1.10.1740.10:FF:000005">
    <property type="entry name" value="1-deoxy-D-xylulose 5-phosphate reductoisomerase"/>
    <property type="match status" value="1"/>
</dbReference>
<dbReference type="FunFam" id="3.40.50.720:FF:000045">
    <property type="entry name" value="1-deoxy-D-xylulose 5-phosphate reductoisomerase"/>
    <property type="match status" value="1"/>
</dbReference>
<dbReference type="Gene3D" id="1.10.1740.10">
    <property type="match status" value="1"/>
</dbReference>
<dbReference type="Gene3D" id="3.40.50.720">
    <property type="entry name" value="NAD(P)-binding Rossmann-like Domain"/>
    <property type="match status" value="1"/>
</dbReference>
<dbReference type="HAMAP" id="MF_00183">
    <property type="entry name" value="DXP_reductoisom"/>
    <property type="match status" value="1"/>
</dbReference>
<dbReference type="InterPro" id="IPR003821">
    <property type="entry name" value="DXP_reductoisomerase"/>
</dbReference>
<dbReference type="InterPro" id="IPR013644">
    <property type="entry name" value="DXP_reductoisomerase_C"/>
</dbReference>
<dbReference type="InterPro" id="IPR013512">
    <property type="entry name" value="DXP_reductoisomerase_N"/>
</dbReference>
<dbReference type="InterPro" id="IPR026877">
    <property type="entry name" value="DXPR_C"/>
</dbReference>
<dbReference type="InterPro" id="IPR036169">
    <property type="entry name" value="DXPR_C_sf"/>
</dbReference>
<dbReference type="InterPro" id="IPR036291">
    <property type="entry name" value="NAD(P)-bd_dom_sf"/>
</dbReference>
<dbReference type="NCBIfam" id="TIGR00243">
    <property type="entry name" value="Dxr"/>
    <property type="match status" value="1"/>
</dbReference>
<dbReference type="NCBIfam" id="NF009114">
    <property type="entry name" value="PRK12464.1"/>
    <property type="match status" value="1"/>
</dbReference>
<dbReference type="PANTHER" id="PTHR30525">
    <property type="entry name" value="1-DEOXY-D-XYLULOSE 5-PHOSPHATE REDUCTOISOMERASE"/>
    <property type="match status" value="1"/>
</dbReference>
<dbReference type="PANTHER" id="PTHR30525:SF0">
    <property type="entry name" value="1-DEOXY-D-XYLULOSE 5-PHOSPHATE REDUCTOISOMERASE, CHLOROPLASTIC"/>
    <property type="match status" value="1"/>
</dbReference>
<dbReference type="Pfam" id="PF08436">
    <property type="entry name" value="DXP_redisom_C"/>
    <property type="match status" value="1"/>
</dbReference>
<dbReference type="Pfam" id="PF02670">
    <property type="entry name" value="DXP_reductoisom"/>
    <property type="match status" value="1"/>
</dbReference>
<dbReference type="Pfam" id="PF13288">
    <property type="entry name" value="DXPR_C"/>
    <property type="match status" value="1"/>
</dbReference>
<dbReference type="PIRSF" id="PIRSF006205">
    <property type="entry name" value="Dxp_reductismrs"/>
    <property type="match status" value="1"/>
</dbReference>
<dbReference type="SUPFAM" id="SSF69055">
    <property type="entry name" value="1-deoxy-D-xylulose-5-phosphate reductoisomerase, C-terminal domain"/>
    <property type="match status" value="1"/>
</dbReference>
<dbReference type="SUPFAM" id="SSF55347">
    <property type="entry name" value="Glyceraldehyde-3-phosphate dehydrogenase-like, C-terminal domain"/>
    <property type="match status" value="1"/>
</dbReference>
<dbReference type="SUPFAM" id="SSF51735">
    <property type="entry name" value="NAD(P)-binding Rossmann-fold domains"/>
    <property type="match status" value="1"/>
</dbReference>
<accession>Q636K5</accession>
<name>DXR2_BACCZ</name>
<reference key="1">
    <citation type="journal article" date="2006" name="J. Bacteriol.">
        <title>Pathogenomic sequence analysis of Bacillus cereus and Bacillus thuringiensis isolates closely related to Bacillus anthracis.</title>
        <authorList>
            <person name="Han C.S."/>
            <person name="Xie G."/>
            <person name="Challacombe J.F."/>
            <person name="Altherr M.R."/>
            <person name="Bhotika S.S."/>
            <person name="Bruce D."/>
            <person name="Campbell C.S."/>
            <person name="Campbell M.L."/>
            <person name="Chen J."/>
            <person name="Chertkov O."/>
            <person name="Cleland C."/>
            <person name="Dimitrijevic M."/>
            <person name="Doggett N.A."/>
            <person name="Fawcett J.J."/>
            <person name="Glavina T."/>
            <person name="Goodwin L.A."/>
            <person name="Hill K.K."/>
            <person name="Hitchcock P."/>
            <person name="Jackson P.J."/>
            <person name="Keim P."/>
            <person name="Kewalramani A.R."/>
            <person name="Longmire J."/>
            <person name="Lucas S."/>
            <person name="Malfatti S."/>
            <person name="McMurry K."/>
            <person name="Meincke L.J."/>
            <person name="Misra M."/>
            <person name="Moseman B.L."/>
            <person name="Mundt M."/>
            <person name="Munk A.C."/>
            <person name="Okinaka R.T."/>
            <person name="Parson-Quintana B."/>
            <person name="Reilly L.P."/>
            <person name="Richardson P."/>
            <person name="Robinson D.L."/>
            <person name="Rubin E."/>
            <person name="Saunders E."/>
            <person name="Tapia R."/>
            <person name="Tesmer J.G."/>
            <person name="Thayer N."/>
            <person name="Thompson L.S."/>
            <person name="Tice H."/>
            <person name="Ticknor L.O."/>
            <person name="Wills P.L."/>
            <person name="Brettin T.S."/>
            <person name="Gilna P."/>
        </authorList>
    </citation>
    <scope>NUCLEOTIDE SEQUENCE [LARGE SCALE GENOMIC DNA]</scope>
    <source>
        <strain>ZK / E33L</strain>
    </source>
</reference>
<feature type="chain" id="PRO_0000163606" description="1-deoxy-D-xylulose 5-phosphate reductoisomerase 2">
    <location>
        <begin position="1"/>
        <end position="380"/>
    </location>
</feature>
<feature type="binding site" evidence="1">
    <location>
        <position position="10"/>
    </location>
    <ligand>
        <name>NADPH</name>
        <dbReference type="ChEBI" id="CHEBI:57783"/>
    </ligand>
</feature>
<feature type="binding site" evidence="1">
    <location>
        <position position="11"/>
    </location>
    <ligand>
        <name>NADPH</name>
        <dbReference type="ChEBI" id="CHEBI:57783"/>
    </ligand>
</feature>
<feature type="binding site" evidence="1">
    <location>
        <position position="12"/>
    </location>
    <ligand>
        <name>NADPH</name>
        <dbReference type="ChEBI" id="CHEBI:57783"/>
    </ligand>
</feature>
<feature type="binding site" evidence="1">
    <location>
        <position position="13"/>
    </location>
    <ligand>
        <name>NADPH</name>
        <dbReference type="ChEBI" id="CHEBI:57783"/>
    </ligand>
</feature>
<feature type="binding site" evidence="1">
    <location>
        <position position="36"/>
    </location>
    <ligand>
        <name>NADPH</name>
        <dbReference type="ChEBI" id="CHEBI:57783"/>
    </ligand>
</feature>
<feature type="binding site" evidence="1">
    <location>
        <position position="37"/>
    </location>
    <ligand>
        <name>NADPH</name>
        <dbReference type="ChEBI" id="CHEBI:57783"/>
    </ligand>
</feature>
<feature type="binding site" evidence="1">
    <location>
        <position position="38"/>
    </location>
    <ligand>
        <name>NADPH</name>
        <dbReference type="ChEBI" id="CHEBI:57783"/>
    </ligand>
</feature>
<feature type="binding site" evidence="1">
    <location>
        <position position="120"/>
    </location>
    <ligand>
        <name>NADPH</name>
        <dbReference type="ChEBI" id="CHEBI:57783"/>
    </ligand>
</feature>
<feature type="binding site" evidence="1">
    <location>
        <position position="121"/>
    </location>
    <ligand>
        <name>1-deoxy-D-xylulose 5-phosphate</name>
        <dbReference type="ChEBI" id="CHEBI:57792"/>
    </ligand>
</feature>
<feature type="binding site" evidence="1">
    <location>
        <position position="122"/>
    </location>
    <ligand>
        <name>NADPH</name>
        <dbReference type="ChEBI" id="CHEBI:57783"/>
    </ligand>
</feature>
<feature type="binding site" evidence="1">
    <location>
        <position position="146"/>
    </location>
    <ligand>
        <name>Mn(2+)</name>
        <dbReference type="ChEBI" id="CHEBI:29035"/>
    </ligand>
</feature>
<feature type="binding site" evidence="1">
    <location>
        <position position="147"/>
    </location>
    <ligand>
        <name>1-deoxy-D-xylulose 5-phosphate</name>
        <dbReference type="ChEBI" id="CHEBI:57792"/>
    </ligand>
</feature>
<feature type="binding site" evidence="1">
    <location>
        <position position="148"/>
    </location>
    <ligand>
        <name>1-deoxy-D-xylulose 5-phosphate</name>
        <dbReference type="ChEBI" id="CHEBI:57792"/>
    </ligand>
</feature>
<feature type="binding site" evidence="1">
    <location>
        <position position="148"/>
    </location>
    <ligand>
        <name>Mn(2+)</name>
        <dbReference type="ChEBI" id="CHEBI:29035"/>
    </ligand>
</feature>
<feature type="binding site" evidence="1">
    <location>
        <position position="172"/>
    </location>
    <ligand>
        <name>1-deoxy-D-xylulose 5-phosphate</name>
        <dbReference type="ChEBI" id="CHEBI:57792"/>
    </ligand>
</feature>
<feature type="binding site" evidence="1">
    <location>
        <position position="195"/>
    </location>
    <ligand>
        <name>1-deoxy-D-xylulose 5-phosphate</name>
        <dbReference type="ChEBI" id="CHEBI:57792"/>
    </ligand>
</feature>
<feature type="binding site" evidence="1">
    <location>
        <position position="201"/>
    </location>
    <ligand>
        <name>NADPH</name>
        <dbReference type="ChEBI" id="CHEBI:57783"/>
    </ligand>
</feature>
<feature type="binding site" evidence="1">
    <location>
        <position position="208"/>
    </location>
    <ligand>
        <name>1-deoxy-D-xylulose 5-phosphate</name>
        <dbReference type="ChEBI" id="CHEBI:57792"/>
    </ligand>
</feature>
<feature type="binding site" evidence="1">
    <location>
        <position position="213"/>
    </location>
    <ligand>
        <name>1-deoxy-D-xylulose 5-phosphate</name>
        <dbReference type="ChEBI" id="CHEBI:57792"/>
    </ligand>
</feature>
<feature type="binding site" evidence="1">
    <location>
        <position position="214"/>
    </location>
    <ligand>
        <name>1-deoxy-D-xylulose 5-phosphate</name>
        <dbReference type="ChEBI" id="CHEBI:57792"/>
    </ligand>
</feature>
<feature type="binding site" evidence="1">
    <location>
        <position position="217"/>
    </location>
    <ligand>
        <name>1-deoxy-D-xylulose 5-phosphate</name>
        <dbReference type="ChEBI" id="CHEBI:57792"/>
    </ligand>
</feature>
<feature type="binding site" evidence="1">
    <location>
        <position position="217"/>
    </location>
    <ligand>
        <name>Mn(2+)</name>
        <dbReference type="ChEBI" id="CHEBI:29035"/>
    </ligand>
</feature>